<keyword id="KW-0028">Amino-acid biosynthesis</keyword>
<keyword id="KW-0055">Arginine biosynthesis</keyword>
<keyword id="KW-0963">Cytoplasm</keyword>
<keyword id="KW-0456">Lyase</keyword>
<keyword id="KW-1185">Reference proteome</keyword>
<gene>
    <name evidence="1" type="primary">argH</name>
    <name type="ordered locus">GK2756</name>
</gene>
<name>ARLY_GEOKA</name>
<dbReference type="EC" id="4.3.2.1" evidence="1"/>
<dbReference type="EMBL" id="BA000043">
    <property type="protein sequence ID" value="BAD77041.1"/>
    <property type="status" value="ALT_INIT"/>
    <property type="molecule type" value="Genomic_DNA"/>
</dbReference>
<dbReference type="RefSeq" id="WP_021322121.1">
    <property type="nucleotide sequence ID" value="NC_006510.1"/>
</dbReference>
<dbReference type="SMR" id="Q5KW95"/>
<dbReference type="STRING" id="235909.GK2756"/>
<dbReference type="GeneID" id="32064655"/>
<dbReference type="KEGG" id="gka:GK2756"/>
<dbReference type="eggNOG" id="COG0165">
    <property type="taxonomic scope" value="Bacteria"/>
</dbReference>
<dbReference type="HOGENOM" id="CLU_027272_2_3_9"/>
<dbReference type="UniPathway" id="UPA00068">
    <property type="reaction ID" value="UER00114"/>
</dbReference>
<dbReference type="Proteomes" id="UP000001172">
    <property type="component" value="Chromosome"/>
</dbReference>
<dbReference type="GO" id="GO:0005829">
    <property type="term" value="C:cytosol"/>
    <property type="evidence" value="ECO:0007669"/>
    <property type="project" value="TreeGrafter"/>
</dbReference>
<dbReference type="GO" id="GO:0004056">
    <property type="term" value="F:argininosuccinate lyase activity"/>
    <property type="evidence" value="ECO:0007669"/>
    <property type="project" value="UniProtKB-UniRule"/>
</dbReference>
<dbReference type="GO" id="GO:0042450">
    <property type="term" value="P:arginine biosynthetic process via ornithine"/>
    <property type="evidence" value="ECO:0007669"/>
    <property type="project" value="InterPro"/>
</dbReference>
<dbReference type="GO" id="GO:0006526">
    <property type="term" value="P:L-arginine biosynthetic process"/>
    <property type="evidence" value="ECO:0007669"/>
    <property type="project" value="UniProtKB-UniRule"/>
</dbReference>
<dbReference type="CDD" id="cd01359">
    <property type="entry name" value="Argininosuccinate_lyase"/>
    <property type="match status" value="1"/>
</dbReference>
<dbReference type="FunFam" id="1.10.275.10:FF:000002">
    <property type="entry name" value="Argininosuccinate lyase"/>
    <property type="match status" value="1"/>
</dbReference>
<dbReference type="FunFam" id="1.10.40.30:FF:000001">
    <property type="entry name" value="Argininosuccinate lyase"/>
    <property type="match status" value="1"/>
</dbReference>
<dbReference type="FunFam" id="1.20.200.10:FF:000006">
    <property type="entry name" value="Argininosuccinate lyase"/>
    <property type="match status" value="1"/>
</dbReference>
<dbReference type="Gene3D" id="1.10.40.30">
    <property type="entry name" value="Fumarase/aspartase (C-terminal domain)"/>
    <property type="match status" value="1"/>
</dbReference>
<dbReference type="Gene3D" id="1.20.200.10">
    <property type="entry name" value="Fumarase/aspartase (Central domain)"/>
    <property type="match status" value="1"/>
</dbReference>
<dbReference type="Gene3D" id="1.10.275.10">
    <property type="entry name" value="Fumarase/aspartase (N-terminal domain)"/>
    <property type="match status" value="1"/>
</dbReference>
<dbReference type="HAMAP" id="MF_00006">
    <property type="entry name" value="Arg_succ_lyase"/>
    <property type="match status" value="1"/>
</dbReference>
<dbReference type="InterPro" id="IPR029419">
    <property type="entry name" value="Arg_succ_lyase_C"/>
</dbReference>
<dbReference type="InterPro" id="IPR009049">
    <property type="entry name" value="Argininosuccinate_lyase"/>
</dbReference>
<dbReference type="InterPro" id="IPR024083">
    <property type="entry name" value="Fumarase/histidase_N"/>
</dbReference>
<dbReference type="InterPro" id="IPR020557">
    <property type="entry name" value="Fumarate_lyase_CS"/>
</dbReference>
<dbReference type="InterPro" id="IPR000362">
    <property type="entry name" value="Fumarate_lyase_fam"/>
</dbReference>
<dbReference type="InterPro" id="IPR022761">
    <property type="entry name" value="Fumarate_lyase_N"/>
</dbReference>
<dbReference type="InterPro" id="IPR008948">
    <property type="entry name" value="L-Aspartase-like"/>
</dbReference>
<dbReference type="NCBIfam" id="TIGR00838">
    <property type="entry name" value="argH"/>
    <property type="match status" value="1"/>
</dbReference>
<dbReference type="PANTHER" id="PTHR43814">
    <property type="entry name" value="ARGININOSUCCINATE LYASE"/>
    <property type="match status" value="1"/>
</dbReference>
<dbReference type="PANTHER" id="PTHR43814:SF1">
    <property type="entry name" value="ARGININOSUCCINATE LYASE"/>
    <property type="match status" value="1"/>
</dbReference>
<dbReference type="Pfam" id="PF14698">
    <property type="entry name" value="ASL_C2"/>
    <property type="match status" value="1"/>
</dbReference>
<dbReference type="Pfam" id="PF00206">
    <property type="entry name" value="Lyase_1"/>
    <property type="match status" value="1"/>
</dbReference>
<dbReference type="PRINTS" id="PR00145">
    <property type="entry name" value="ARGSUCLYASE"/>
</dbReference>
<dbReference type="PRINTS" id="PR00149">
    <property type="entry name" value="FUMRATELYASE"/>
</dbReference>
<dbReference type="SUPFAM" id="SSF48557">
    <property type="entry name" value="L-aspartase-like"/>
    <property type="match status" value="1"/>
</dbReference>
<dbReference type="PROSITE" id="PS00163">
    <property type="entry name" value="FUMARATE_LYASES"/>
    <property type="match status" value="1"/>
</dbReference>
<reference key="1">
    <citation type="journal article" date="2004" name="Nucleic Acids Res.">
        <title>Thermoadaptation trait revealed by the genome sequence of thermophilic Geobacillus kaustophilus.</title>
        <authorList>
            <person name="Takami H."/>
            <person name="Takaki Y."/>
            <person name="Chee G.-J."/>
            <person name="Nishi S."/>
            <person name="Shimamura S."/>
            <person name="Suzuki H."/>
            <person name="Matsui S."/>
            <person name="Uchiyama I."/>
        </authorList>
    </citation>
    <scope>NUCLEOTIDE SEQUENCE [LARGE SCALE GENOMIC DNA]</scope>
    <source>
        <strain>HTA426</strain>
    </source>
</reference>
<accession>Q5KW95</accession>
<organism>
    <name type="scientific">Geobacillus kaustophilus (strain HTA426)</name>
    <dbReference type="NCBI Taxonomy" id="235909"/>
    <lineage>
        <taxon>Bacteria</taxon>
        <taxon>Bacillati</taxon>
        <taxon>Bacillota</taxon>
        <taxon>Bacilli</taxon>
        <taxon>Bacillales</taxon>
        <taxon>Anoxybacillaceae</taxon>
        <taxon>Geobacillus</taxon>
        <taxon>Geobacillus thermoleovorans group</taxon>
    </lineage>
</organism>
<protein>
    <recommendedName>
        <fullName evidence="1">Argininosuccinate lyase</fullName>
        <shortName evidence="1">ASAL</shortName>
        <ecNumber evidence="1">4.3.2.1</ecNumber>
    </recommendedName>
    <alternativeName>
        <fullName evidence="1">Arginosuccinase</fullName>
    </alternativeName>
</protein>
<evidence type="ECO:0000255" key="1">
    <source>
        <dbReference type="HAMAP-Rule" id="MF_00006"/>
    </source>
</evidence>
<evidence type="ECO:0000305" key="2"/>
<feature type="chain" id="PRO_0000137772" description="Argininosuccinate lyase">
    <location>
        <begin position="1"/>
        <end position="459"/>
    </location>
</feature>
<sequence length="459" mass="51553">MKKLWGGRFTKTAEEWVDEFGASIPFDQELVEEDIEGSLAHVTMLGECGILPEGDVEQIKGGLIRLLEKAKQGELKFSIAYEDIHLNIEKMLIDDIGPVGGKLHTGRSRNDQVATDMHLYLRKRVEEILGLIRGMQRALVAQAEKHVETIMPGYTHLQRAQPISFAHHLLAYFWMLERDYERFSESQKRINRSPLGAGALAGTTFPIDRHRTAELLGFADIYENSLDAVSDRDFIIEFLSNSSMLMMHLSRLAEELILWSSQEFQFIELDDAFATGSSIMPQKKNPDMAELIRGKTGRVYGHLMALLTVMKGLPLAYNKDMQEDKEGMFDTVKTVIGSLKIFTGMIETMNVRTDVMERATKQDFSNATELADYLAAKGVPFREAHEIVGKLVLHCIEQGVFLADLPLDVYKEASPLFEEDIYDALHPRTAVNRRNSAGGTGFAEVRAALAKAKQLLSTP</sequence>
<proteinExistence type="inferred from homology"/>
<comment type="catalytic activity">
    <reaction evidence="1">
        <text>2-(N(omega)-L-arginino)succinate = fumarate + L-arginine</text>
        <dbReference type="Rhea" id="RHEA:24020"/>
        <dbReference type="ChEBI" id="CHEBI:29806"/>
        <dbReference type="ChEBI" id="CHEBI:32682"/>
        <dbReference type="ChEBI" id="CHEBI:57472"/>
        <dbReference type="EC" id="4.3.2.1"/>
    </reaction>
</comment>
<comment type="pathway">
    <text evidence="1">Amino-acid biosynthesis; L-arginine biosynthesis; L-arginine from L-ornithine and carbamoyl phosphate: step 3/3.</text>
</comment>
<comment type="subcellular location">
    <subcellularLocation>
        <location evidence="1">Cytoplasm</location>
    </subcellularLocation>
</comment>
<comment type="similarity">
    <text evidence="1">Belongs to the lyase 1 family. Argininosuccinate lyase subfamily.</text>
</comment>
<comment type="sequence caution" evidence="2">
    <conflict type="erroneous initiation">
        <sequence resource="EMBL-CDS" id="BAD77041"/>
    </conflict>
</comment>